<dbReference type="EMBL" id="CP001029">
    <property type="protein sequence ID" value="ACB81295.1"/>
    <property type="molecule type" value="Genomic_DNA"/>
</dbReference>
<dbReference type="RefSeq" id="WP_012455012.1">
    <property type="nucleotide sequence ID" value="NC_010725.1"/>
</dbReference>
<dbReference type="SMR" id="B1ZGR2"/>
<dbReference type="STRING" id="441620.Mpop_3143"/>
<dbReference type="KEGG" id="mpo:Mpop_3143"/>
<dbReference type="eggNOG" id="COG0484">
    <property type="taxonomic scope" value="Bacteria"/>
</dbReference>
<dbReference type="HOGENOM" id="CLU_017633_0_7_5"/>
<dbReference type="OrthoDB" id="9779889at2"/>
<dbReference type="Proteomes" id="UP000007136">
    <property type="component" value="Chromosome"/>
</dbReference>
<dbReference type="GO" id="GO:0005737">
    <property type="term" value="C:cytoplasm"/>
    <property type="evidence" value="ECO:0007669"/>
    <property type="project" value="UniProtKB-SubCell"/>
</dbReference>
<dbReference type="GO" id="GO:0005524">
    <property type="term" value="F:ATP binding"/>
    <property type="evidence" value="ECO:0007669"/>
    <property type="project" value="InterPro"/>
</dbReference>
<dbReference type="GO" id="GO:0031072">
    <property type="term" value="F:heat shock protein binding"/>
    <property type="evidence" value="ECO:0007669"/>
    <property type="project" value="InterPro"/>
</dbReference>
<dbReference type="GO" id="GO:0051082">
    <property type="term" value="F:unfolded protein binding"/>
    <property type="evidence" value="ECO:0007669"/>
    <property type="project" value="UniProtKB-UniRule"/>
</dbReference>
<dbReference type="GO" id="GO:0008270">
    <property type="term" value="F:zinc ion binding"/>
    <property type="evidence" value="ECO:0007669"/>
    <property type="project" value="UniProtKB-UniRule"/>
</dbReference>
<dbReference type="GO" id="GO:0051085">
    <property type="term" value="P:chaperone cofactor-dependent protein refolding"/>
    <property type="evidence" value="ECO:0007669"/>
    <property type="project" value="TreeGrafter"/>
</dbReference>
<dbReference type="GO" id="GO:0006260">
    <property type="term" value="P:DNA replication"/>
    <property type="evidence" value="ECO:0007669"/>
    <property type="project" value="UniProtKB-KW"/>
</dbReference>
<dbReference type="GO" id="GO:0042026">
    <property type="term" value="P:protein refolding"/>
    <property type="evidence" value="ECO:0007669"/>
    <property type="project" value="TreeGrafter"/>
</dbReference>
<dbReference type="GO" id="GO:0009408">
    <property type="term" value="P:response to heat"/>
    <property type="evidence" value="ECO:0007669"/>
    <property type="project" value="InterPro"/>
</dbReference>
<dbReference type="CDD" id="cd06257">
    <property type="entry name" value="DnaJ"/>
    <property type="match status" value="1"/>
</dbReference>
<dbReference type="CDD" id="cd10747">
    <property type="entry name" value="DnaJ_C"/>
    <property type="match status" value="1"/>
</dbReference>
<dbReference type="CDD" id="cd10719">
    <property type="entry name" value="DnaJ_zf"/>
    <property type="match status" value="1"/>
</dbReference>
<dbReference type="FunFam" id="1.10.287.110:FF:000034">
    <property type="entry name" value="Chaperone protein DnaJ"/>
    <property type="match status" value="1"/>
</dbReference>
<dbReference type="FunFam" id="2.10.230.10:FF:000002">
    <property type="entry name" value="Molecular chaperone DnaJ"/>
    <property type="match status" value="1"/>
</dbReference>
<dbReference type="FunFam" id="2.60.260.20:FF:000004">
    <property type="entry name" value="Molecular chaperone DnaJ"/>
    <property type="match status" value="1"/>
</dbReference>
<dbReference type="Gene3D" id="1.10.287.110">
    <property type="entry name" value="DnaJ domain"/>
    <property type="match status" value="1"/>
</dbReference>
<dbReference type="Gene3D" id="2.10.230.10">
    <property type="entry name" value="Heat shock protein DnaJ, cysteine-rich domain"/>
    <property type="match status" value="1"/>
</dbReference>
<dbReference type="Gene3D" id="2.60.260.20">
    <property type="entry name" value="Urease metallochaperone UreE, N-terminal domain"/>
    <property type="match status" value="2"/>
</dbReference>
<dbReference type="HAMAP" id="MF_01152">
    <property type="entry name" value="DnaJ"/>
    <property type="match status" value="1"/>
</dbReference>
<dbReference type="InterPro" id="IPR012724">
    <property type="entry name" value="DnaJ"/>
</dbReference>
<dbReference type="InterPro" id="IPR002939">
    <property type="entry name" value="DnaJ_C"/>
</dbReference>
<dbReference type="InterPro" id="IPR001623">
    <property type="entry name" value="DnaJ_domain"/>
</dbReference>
<dbReference type="InterPro" id="IPR018253">
    <property type="entry name" value="DnaJ_domain_CS"/>
</dbReference>
<dbReference type="InterPro" id="IPR008971">
    <property type="entry name" value="HSP40/DnaJ_pept-bd"/>
</dbReference>
<dbReference type="InterPro" id="IPR001305">
    <property type="entry name" value="HSP_DnaJ_Cys-rich_dom"/>
</dbReference>
<dbReference type="InterPro" id="IPR036410">
    <property type="entry name" value="HSP_DnaJ_Cys-rich_dom_sf"/>
</dbReference>
<dbReference type="InterPro" id="IPR036869">
    <property type="entry name" value="J_dom_sf"/>
</dbReference>
<dbReference type="NCBIfam" id="TIGR02349">
    <property type="entry name" value="DnaJ_bact"/>
    <property type="match status" value="1"/>
</dbReference>
<dbReference type="NCBIfam" id="NF008035">
    <property type="entry name" value="PRK10767.1"/>
    <property type="match status" value="1"/>
</dbReference>
<dbReference type="PANTHER" id="PTHR43096:SF48">
    <property type="entry name" value="CHAPERONE PROTEIN DNAJ"/>
    <property type="match status" value="1"/>
</dbReference>
<dbReference type="PANTHER" id="PTHR43096">
    <property type="entry name" value="DNAJ HOMOLOG 1, MITOCHONDRIAL-RELATED"/>
    <property type="match status" value="1"/>
</dbReference>
<dbReference type="Pfam" id="PF00226">
    <property type="entry name" value="DnaJ"/>
    <property type="match status" value="1"/>
</dbReference>
<dbReference type="Pfam" id="PF01556">
    <property type="entry name" value="DnaJ_C"/>
    <property type="match status" value="1"/>
</dbReference>
<dbReference type="Pfam" id="PF00684">
    <property type="entry name" value="DnaJ_CXXCXGXG"/>
    <property type="match status" value="1"/>
</dbReference>
<dbReference type="PRINTS" id="PR00625">
    <property type="entry name" value="JDOMAIN"/>
</dbReference>
<dbReference type="SMART" id="SM00271">
    <property type="entry name" value="DnaJ"/>
    <property type="match status" value="1"/>
</dbReference>
<dbReference type="SUPFAM" id="SSF46565">
    <property type="entry name" value="Chaperone J-domain"/>
    <property type="match status" value="1"/>
</dbReference>
<dbReference type="SUPFAM" id="SSF57938">
    <property type="entry name" value="DnaJ/Hsp40 cysteine-rich domain"/>
    <property type="match status" value="1"/>
</dbReference>
<dbReference type="SUPFAM" id="SSF49493">
    <property type="entry name" value="HSP40/DnaJ peptide-binding domain"/>
    <property type="match status" value="2"/>
</dbReference>
<dbReference type="PROSITE" id="PS00636">
    <property type="entry name" value="DNAJ_1"/>
    <property type="match status" value="1"/>
</dbReference>
<dbReference type="PROSITE" id="PS50076">
    <property type="entry name" value="DNAJ_2"/>
    <property type="match status" value="1"/>
</dbReference>
<dbReference type="PROSITE" id="PS51188">
    <property type="entry name" value="ZF_CR"/>
    <property type="match status" value="1"/>
</dbReference>
<keyword id="KW-0143">Chaperone</keyword>
<keyword id="KW-0963">Cytoplasm</keyword>
<keyword id="KW-0235">DNA replication</keyword>
<keyword id="KW-0479">Metal-binding</keyword>
<keyword id="KW-0677">Repeat</keyword>
<keyword id="KW-0346">Stress response</keyword>
<keyword id="KW-0862">Zinc</keyword>
<keyword id="KW-0863">Zinc-finger</keyword>
<reference key="1">
    <citation type="submission" date="2008-04" db="EMBL/GenBank/DDBJ databases">
        <title>Complete sequence of chromosome of Methylobacterium populi BJ001.</title>
        <authorList>
            <consortium name="US DOE Joint Genome Institute"/>
            <person name="Copeland A."/>
            <person name="Lucas S."/>
            <person name="Lapidus A."/>
            <person name="Glavina del Rio T."/>
            <person name="Dalin E."/>
            <person name="Tice H."/>
            <person name="Bruce D."/>
            <person name="Goodwin L."/>
            <person name="Pitluck S."/>
            <person name="Chertkov O."/>
            <person name="Brettin T."/>
            <person name="Detter J.C."/>
            <person name="Han C."/>
            <person name="Kuske C.R."/>
            <person name="Schmutz J."/>
            <person name="Larimer F."/>
            <person name="Land M."/>
            <person name="Hauser L."/>
            <person name="Kyrpides N."/>
            <person name="Mikhailova N."/>
            <person name="Marx C."/>
            <person name="Richardson P."/>
        </authorList>
    </citation>
    <scope>NUCLEOTIDE SEQUENCE [LARGE SCALE GENOMIC DNA]</scope>
    <source>
        <strain>ATCC BAA-705 / NCIMB 13946 / BJ001</strain>
    </source>
</reference>
<proteinExistence type="inferred from homology"/>
<accession>B1ZGR2</accession>
<feature type="chain" id="PRO_1000164271" description="Chaperone protein DnaJ">
    <location>
        <begin position="1"/>
        <end position="383"/>
    </location>
</feature>
<feature type="domain" description="J" evidence="1">
    <location>
        <begin position="5"/>
        <end position="70"/>
    </location>
</feature>
<feature type="repeat" description="CXXCXGXG motif">
    <location>
        <begin position="152"/>
        <end position="159"/>
    </location>
</feature>
<feature type="repeat" description="CXXCXGXG motif">
    <location>
        <begin position="169"/>
        <end position="176"/>
    </location>
</feature>
<feature type="repeat" description="CXXCXGXG motif">
    <location>
        <begin position="191"/>
        <end position="198"/>
    </location>
</feature>
<feature type="repeat" description="CXXCXGXG motif">
    <location>
        <begin position="205"/>
        <end position="212"/>
    </location>
</feature>
<feature type="zinc finger region" description="CR-type" evidence="1">
    <location>
        <begin position="139"/>
        <end position="217"/>
    </location>
</feature>
<feature type="binding site" evidence="1">
    <location>
        <position position="152"/>
    </location>
    <ligand>
        <name>Zn(2+)</name>
        <dbReference type="ChEBI" id="CHEBI:29105"/>
        <label>1</label>
    </ligand>
</feature>
<feature type="binding site" evidence="1">
    <location>
        <position position="155"/>
    </location>
    <ligand>
        <name>Zn(2+)</name>
        <dbReference type="ChEBI" id="CHEBI:29105"/>
        <label>1</label>
    </ligand>
</feature>
<feature type="binding site" evidence="1">
    <location>
        <position position="169"/>
    </location>
    <ligand>
        <name>Zn(2+)</name>
        <dbReference type="ChEBI" id="CHEBI:29105"/>
        <label>2</label>
    </ligand>
</feature>
<feature type="binding site" evidence="1">
    <location>
        <position position="172"/>
    </location>
    <ligand>
        <name>Zn(2+)</name>
        <dbReference type="ChEBI" id="CHEBI:29105"/>
        <label>2</label>
    </ligand>
</feature>
<feature type="binding site" evidence="1">
    <location>
        <position position="191"/>
    </location>
    <ligand>
        <name>Zn(2+)</name>
        <dbReference type="ChEBI" id="CHEBI:29105"/>
        <label>2</label>
    </ligand>
</feature>
<feature type="binding site" evidence="1">
    <location>
        <position position="194"/>
    </location>
    <ligand>
        <name>Zn(2+)</name>
        <dbReference type="ChEBI" id="CHEBI:29105"/>
        <label>2</label>
    </ligand>
</feature>
<feature type="binding site" evidence="1">
    <location>
        <position position="205"/>
    </location>
    <ligand>
        <name>Zn(2+)</name>
        <dbReference type="ChEBI" id="CHEBI:29105"/>
        <label>1</label>
    </ligand>
</feature>
<feature type="binding site" evidence="1">
    <location>
        <position position="208"/>
    </location>
    <ligand>
        <name>Zn(2+)</name>
        <dbReference type="ChEBI" id="CHEBI:29105"/>
        <label>1</label>
    </ligand>
</feature>
<protein>
    <recommendedName>
        <fullName evidence="1">Chaperone protein DnaJ</fullName>
    </recommendedName>
</protein>
<comment type="function">
    <text evidence="1">Participates actively in the response to hyperosmotic and heat shock by preventing the aggregation of stress-denatured proteins and by disaggregating proteins, also in an autonomous, DnaK-independent fashion. Unfolded proteins bind initially to DnaJ; upon interaction with the DnaJ-bound protein, DnaK hydrolyzes its bound ATP, resulting in the formation of a stable complex. GrpE releases ADP from DnaK; ATP binding to DnaK triggers the release of the substrate protein, thus completing the reaction cycle. Several rounds of ATP-dependent interactions between DnaJ, DnaK and GrpE are required for fully efficient folding. Also involved, together with DnaK and GrpE, in the DNA replication of plasmids through activation of initiation proteins.</text>
</comment>
<comment type="cofactor">
    <cofactor evidence="1">
        <name>Zn(2+)</name>
        <dbReference type="ChEBI" id="CHEBI:29105"/>
    </cofactor>
    <text evidence="1">Binds 2 Zn(2+) ions per monomer.</text>
</comment>
<comment type="subunit">
    <text evidence="1">Homodimer.</text>
</comment>
<comment type="subcellular location">
    <subcellularLocation>
        <location evidence="1">Cytoplasm</location>
    </subcellularLocation>
</comment>
<comment type="domain">
    <text evidence="1">The J domain is necessary and sufficient to stimulate DnaK ATPase activity. Zinc center 1 plays an important role in the autonomous, DnaK-independent chaperone activity of DnaJ. Zinc center 2 is essential for interaction with DnaK and for DnaJ activity.</text>
</comment>
<comment type="similarity">
    <text evidence="1">Belongs to the DnaJ family.</text>
</comment>
<organism>
    <name type="scientific">Methylorubrum populi (strain ATCC BAA-705 / NCIMB 13946 / BJ001)</name>
    <name type="common">Methylobacterium populi</name>
    <dbReference type="NCBI Taxonomy" id="441620"/>
    <lineage>
        <taxon>Bacteria</taxon>
        <taxon>Pseudomonadati</taxon>
        <taxon>Pseudomonadota</taxon>
        <taxon>Alphaproteobacteria</taxon>
        <taxon>Hyphomicrobiales</taxon>
        <taxon>Methylobacteriaceae</taxon>
        <taxon>Methylorubrum</taxon>
    </lineage>
</organism>
<sequence length="383" mass="41158">MSKRDYYEVLGVAKTASESELKVAFRKLAMVHHPDRNPGDKEAEIKFKEVNEAYQCLSDGEKRAAYDRFGHAAFSQGGAGGPGFGNEFGDFMSDIFENFFGDGRGAPGGGRGRGGAPGRERGADLRYNLEISLEEAFSGKTETIRIPTSIACEACSGTGAKAGSKPRTCSTCGGYGRVRAAQGFFAIERTCPNCHGRGEVVDDPCTACSGAGRVNRERTLSINVPAGVDDGLRIRLAGEGESGLRGGPSGDLYVFLSIKPHPFFQRDGADLFCRVPISMVTAALSGEITVPVIDGSQTQVRIPAGTQTAKQFRIKGKGMPVLRSREVGDLYIQVSVETPQNLTKRQRELLQEFDQSASDENHPESAGFFSKVRDFFVSGATRA</sequence>
<gene>
    <name evidence="1" type="primary">dnaJ</name>
    <name type="ordered locus">Mpop_3143</name>
</gene>
<name>DNAJ_METPB</name>
<evidence type="ECO:0000255" key="1">
    <source>
        <dbReference type="HAMAP-Rule" id="MF_01152"/>
    </source>
</evidence>